<reference key="1">
    <citation type="journal article" date="2003" name="Nucleic Acids Res.">
        <title>Genome sequence of Chlamydophila caviae (Chlamydia psittaci GPIC): examining the role of niche-specific genes in the evolution of the Chlamydiaceae.</title>
        <authorList>
            <person name="Read T.D."/>
            <person name="Myers G.S.A."/>
            <person name="Brunham R.C."/>
            <person name="Nelson W.C."/>
            <person name="Paulsen I.T."/>
            <person name="Heidelberg J.F."/>
            <person name="Holtzapple E.K."/>
            <person name="Khouri H.M."/>
            <person name="Federova N.B."/>
            <person name="Carty H.A."/>
            <person name="Umayam L.A."/>
            <person name="Haft D.H."/>
            <person name="Peterson J.D."/>
            <person name="Beanan M.J."/>
            <person name="White O."/>
            <person name="Salzberg S.L."/>
            <person name="Hsia R.-C."/>
            <person name="McClarty G."/>
            <person name="Rank R.G."/>
            <person name="Bavoil P.M."/>
            <person name="Fraser C.M."/>
        </authorList>
    </citation>
    <scope>NUCLEOTIDE SEQUENCE [LARGE SCALE GENOMIC DNA]</scope>
    <source>
        <strain>ATCC VR-813 / DSM 19441 / 03DC25 / GPIC</strain>
    </source>
</reference>
<accession>Q822Y3</accession>
<gene>
    <name evidence="1" type="primary">argR</name>
    <name type="ordered locus">CCA_00543</name>
</gene>
<keyword id="KW-0028">Amino-acid biosynthesis</keyword>
<keyword id="KW-0055">Arginine biosynthesis</keyword>
<keyword id="KW-0963">Cytoplasm</keyword>
<keyword id="KW-0238">DNA-binding</keyword>
<keyword id="KW-0678">Repressor</keyword>
<keyword id="KW-0804">Transcription</keyword>
<keyword id="KW-0805">Transcription regulation</keyword>
<organism>
    <name type="scientific">Chlamydia caviae (strain ATCC VR-813 / DSM 19441 / 03DC25 / GPIC)</name>
    <name type="common">Chlamydophila caviae</name>
    <dbReference type="NCBI Taxonomy" id="227941"/>
    <lineage>
        <taxon>Bacteria</taxon>
        <taxon>Pseudomonadati</taxon>
        <taxon>Chlamydiota</taxon>
        <taxon>Chlamydiia</taxon>
        <taxon>Chlamydiales</taxon>
        <taxon>Chlamydiaceae</taxon>
        <taxon>Chlamydia/Chlamydophila group</taxon>
        <taxon>Chlamydia</taxon>
    </lineage>
</organism>
<proteinExistence type="inferred from homology"/>
<name>ARGR_CHLCV</name>
<protein>
    <recommendedName>
        <fullName evidence="1">Arginine repressor</fullName>
    </recommendedName>
</protein>
<sequence length="147" mass="15956">MKKNVALDKALKEILNEEGASTQEEICEKLSSLGIATTQSSVSRWLKKVHAIKIPGDKGARYSLPPSIDDSSIKHLVFSIRHNSSLIVIRTAPGSASWIASLIDNKFAESILGTLAGDDTIFITPITESTISLTAKDIENFLLVFSE</sequence>
<comment type="function">
    <text evidence="1">Regulates arginine biosynthesis genes.</text>
</comment>
<comment type="pathway">
    <text>Amino-acid biosynthesis; L-arginine biosynthesis [regulation].</text>
</comment>
<comment type="subcellular location">
    <subcellularLocation>
        <location evidence="1">Cytoplasm</location>
    </subcellularLocation>
</comment>
<comment type="similarity">
    <text evidence="1">Belongs to the ArgR family.</text>
</comment>
<feature type="chain" id="PRO_0000205075" description="Arginine repressor">
    <location>
        <begin position="1"/>
        <end position="147"/>
    </location>
</feature>
<evidence type="ECO:0000255" key="1">
    <source>
        <dbReference type="HAMAP-Rule" id="MF_00173"/>
    </source>
</evidence>
<dbReference type="EMBL" id="AE015925">
    <property type="protein sequence ID" value="AAP05286.1"/>
    <property type="molecule type" value="Genomic_DNA"/>
</dbReference>
<dbReference type="RefSeq" id="WP_011006501.1">
    <property type="nucleotide sequence ID" value="NC_003361.3"/>
</dbReference>
<dbReference type="SMR" id="Q822Y3"/>
<dbReference type="STRING" id="227941.CCA_00543"/>
<dbReference type="KEGG" id="cca:CCA_00543"/>
<dbReference type="eggNOG" id="COG1438">
    <property type="taxonomic scope" value="Bacteria"/>
</dbReference>
<dbReference type="HOGENOM" id="CLU_097103_2_0_0"/>
<dbReference type="OrthoDB" id="9807089at2"/>
<dbReference type="UniPathway" id="UPA00068"/>
<dbReference type="Proteomes" id="UP000002193">
    <property type="component" value="Chromosome"/>
</dbReference>
<dbReference type="GO" id="GO:0005737">
    <property type="term" value="C:cytoplasm"/>
    <property type="evidence" value="ECO:0007669"/>
    <property type="project" value="UniProtKB-SubCell"/>
</dbReference>
<dbReference type="GO" id="GO:0034618">
    <property type="term" value="F:arginine binding"/>
    <property type="evidence" value="ECO:0007669"/>
    <property type="project" value="InterPro"/>
</dbReference>
<dbReference type="GO" id="GO:0003677">
    <property type="term" value="F:DNA binding"/>
    <property type="evidence" value="ECO:0007669"/>
    <property type="project" value="UniProtKB-KW"/>
</dbReference>
<dbReference type="GO" id="GO:0003700">
    <property type="term" value="F:DNA-binding transcription factor activity"/>
    <property type="evidence" value="ECO:0007669"/>
    <property type="project" value="UniProtKB-UniRule"/>
</dbReference>
<dbReference type="GO" id="GO:0006526">
    <property type="term" value="P:L-arginine biosynthetic process"/>
    <property type="evidence" value="ECO:0007669"/>
    <property type="project" value="UniProtKB-UniPathway"/>
</dbReference>
<dbReference type="GO" id="GO:0051259">
    <property type="term" value="P:protein complex oligomerization"/>
    <property type="evidence" value="ECO:0007669"/>
    <property type="project" value="InterPro"/>
</dbReference>
<dbReference type="GO" id="GO:1900079">
    <property type="term" value="P:regulation of arginine biosynthetic process"/>
    <property type="evidence" value="ECO:0007669"/>
    <property type="project" value="UniProtKB-UniRule"/>
</dbReference>
<dbReference type="Gene3D" id="3.30.1360.40">
    <property type="match status" value="1"/>
</dbReference>
<dbReference type="Gene3D" id="1.10.10.10">
    <property type="entry name" value="Winged helix-like DNA-binding domain superfamily/Winged helix DNA-binding domain"/>
    <property type="match status" value="1"/>
</dbReference>
<dbReference type="HAMAP" id="MF_00173">
    <property type="entry name" value="Arg_repressor"/>
    <property type="match status" value="1"/>
</dbReference>
<dbReference type="InterPro" id="IPR001669">
    <property type="entry name" value="Arg_repress"/>
</dbReference>
<dbReference type="InterPro" id="IPR020899">
    <property type="entry name" value="Arg_repress_C"/>
</dbReference>
<dbReference type="InterPro" id="IPR036251">
    <property type="entry name" value="Arg_repress_C_sf"/>
</dbReference>
<dbReference type="InterPro" id="IPR020900">
    <property type="entry name" value="Arg_repress_DNA-bd"/>
</dbReference>
<dbReference type="InterPro" id="IPR036388">
    <property type="entry name" value="WH-like_DNA-bd_sf"/>
</dbReference>
<dbReference type="InterPro" id="IPR036390">
    <property type="entry name" value="WH_DNA-bd_sf"/>
</dbReference>
<dbReference type="NCBIfam" id="TIGR01529">
    <property type="entry name" value="argR_whole"/>
    <property type="match status" value="1"/>
</dbReference>
<dbReference type="PANTHER" id="PTHR34471">
    <property type="entry name" value="ARGININE REPRESSOR"/>
    <property type="match status" value="1"/>
</dbReference>
<dbReference type="PANTHER" id="PTHR34471:SF1">
    <property type="entry name" value="ARGININE REPRESSOR"/>
    <property type="match status" value="1"/>
</dbReference>
<dbReference type="Pfam" id="PF01316">
    <property type="entry name" value="Arg_repressor"/>
    <property type="match status" value="1"/>
</dbReference>
<dbReference type="Pfam" id="PF02863">
    <property type="entry name" value="Arg_repressor_C"/>
    <property type="match status" value="1"/>
</dbReference>
<dbReference type="PRINTS" id="PR01467">
    <property type="entry name" value="ARGREPRESSOR"/>
</dbReference>
<dbReference type="SUPFAM" id="SSF55252">
    <property type="entry name" value="C-terminal domain of arginine repressor"/>
    <property type="match status" value="1"/>
</dbReference>
<dbReference type="SUPFAM" id="SSF46785">
    <property type="entry name" value="Winged helix' DNA-binding domain"/>
    <property type="match status" value="1"/>
</dbReference>